<name>ECFA2_STAAB</name>
<protein>
    <recommendedName>
        <fullName evidence="1">Energy-coupling factor transporter ATP-binding protein EcfA2</fullName>
        <shortName evidence="1">ECF transporter A component EcfA2</shortName>
        <ecNumber evidence="1">7.-.-.-</ecNumber>
    </recommendedName>
</protein>
<gene>
    <name evidence="1" type="primary">ecfA2</name>
    <name type="synonym">cbiO2</name>
    <name type="ordered locus">SAB2094c</name>
</gene>
<reference key="1">
    <citation type="journal article" date="2007" name="PLoS ONE">
        <title>Molecular correlates of host specialization in Staphylococcus aureus.</title>
        <authorList>
            <person name="Herron-Olson L."/>
            <person name="Fitzgerald J.R."/>
            <person name="Musser J.M."/>
            <person name="Kapur V."/>
        </authorList>
    </citation>
    <scope>NUCLEOTIDE SEQUENCE [LARGE SCALE GENOMIC DNA]</scope>
    <source>
        <strain>bovine RF122 / ET3-1</strain>
    </source>
</reference>
<sequence length="286" mass="32908">MTIRFDNVSYTYQKGTPYQHQAIHDVNTEFEQGKYYAIVGQTGSGKSTLIQNINALLKPTTGTVTVDDITITHKTKDKYIRPVRKRIGMVFQFPESQLFEDTVEREMIFGPKNFKMNLDEAKNYAHRLLMDLGFSRDVMSQSPFQMSGGQMRKIAIVSILAMNPDIIVVDEPTAGLDPQSKRQVMRLLKSLQTDENKAIILISHDMNEVARYADEVIVMKEGSIVSQTSPKELFKDKEKLADWHIALPEIVQLQYDFEQKHQTKLKDIALTEEAFVSLYKEWQHEK</sequence>
<feature type="chain" id="PRO_0000287981" description="Energy-coupling factor transporter ATP-binding protein EcfA2">
    <location>
        <begin position="1"/>
        <end position="286"/>
    </location>
</feature>
<feature type="domain" description="ABC transporter" evidence="1">
    <location>
        <begin position="3"/>
        <end position="246"/>
    </location>
</feature>
<feature type="binding site" evidence="1">
    <location>
        <begin position="40"/>
        <end position="47"/>
    </location>
    <ligand>
        <name>ATP</name>
        <dbReference type="ChEBI" id="CHEBI:30616"/>
    </ligand>
</feature>
<dbReference type="EC" id="7.-.-.-" evidence="1"/>
<dbReference type="EMBL" id="AJ938182">
    <property type="protein sequence ID" value="CAI81783.1"/>
    <property type="molecule type" value="Genomic_DNA"/>
</dbReference>
<dbReference type="RefSeq" id="WP_000155382.1">
    <property type="nucleotide sequence ID" value="NC_007622.1"/>
</dbReference>
<dbReference type="SMR" id="Q2YYM5"/>
<dbReference type="KEGG" id="sab:SAB2094c"/>
<dbReference type="HOGENOM" id="CLU_000604_1_22_9"/>
<dbReference type="GO" id="GO:0043190">
    <property type="term" value="C:ATP-binding cassette (ABC) transporter complex"/>
    <property type="evidence" value="ECO:0007669"/>
    <property type="project" value="TreeGrafter"/>
</dbReference>
<dbReference type="GO" id="GO:0005524">
    <property type="term" value="F:ATP binding"/>
    <property type="evidence" value="ECO:0007669"/>
    <property type="project" value="UniProtKB-KW"/>
</dbReference>
<dbReference type="GO" id="GO:0016887">
    <property type="term" value="F:ATP hydrolysis activity"/>
    <property type="evidence" value="ECO:0007669"/>
    <property type="project" value="InterPro"/>
</dbReference>
<dbReference type="GO" id="GO:0042626">
    <property type="term" value="F:ATPase-coupled transmembrane transporter activity"/>
    <property type="evidence" value="ECO:0007669"/>
    <property type="project" value="TreeGrafter"/>
</dbReference>
<dbReference type="CDD" id="cd03225">
    <property type="entry name" value="ABC_cobalt_CbiO_domain1"/>
    <property type="match status" value="1"/>
</dbReference>
<dbReference type="FunFam" id="3.40.50.300:FF:000224">
    <property type="entry name" value="Energy-coupling factor transporter ATP-binding protein EcfA"/>
    <property type="match status" value="1"/>
</dbReference>
<dbReference type="Gene3D" id="3.40.50.300">
    <property type="entry name" value="P-loop containing nucleotide triphosphate hydrolases"/>
    <property type="match status" value="1"/>
</dbReference>
<dbReference type="InterPro" id="IPR003593">
    <property type="entry name" value="AAA+_ATPase"/>
</dbReference>
<dbReference type="InterPro" id="IPR003439">
    <property type="entry name" value="ABC_transporter-like_ATP-bd"/>
</dbReference>
<dbReference type="InterPro" id="IPR017871">
    <property type="entry name" value="ABC_transporter-like_CS"/>
</dbReference>
<dbReference type="InterPro" id="IPR015856">
    <property type="entry name" value="ABC_transpr_CbiO/EcfA_su"/>
</dbReference>
<dbReference type="InterPro" id="IPR050095">
    <property type="entry name" value="ECF_ABC_transporter_ATP-bd"/>
</dbReference>
<dbReference type="InterPro" id="IPR030946">
    <property type="entry name" value="EcfA2"/>
</dbReference>
<dbReference type="InterPro" id="IPR027417">
    <property type="entry name" value="P-loop_NTPase"/>
</dbReference>
<dbReference type="NCBIfam" id="TIGR04521">
    <property type="entry name" value="ECF_ATPase_2"/>
    <property type="match status" value="1"/>
</dbReference>
<dbReference type="NCBIfam" id="NF010166">
    <property type="entry name" value="PRK13646.1"/>
    <property type="match status" value="1"/>
</dbReference>
<dbReference type="PANTHER" id="PTHR43553:SF27">
    <property type="entry name" value="ENERGY-COUPLING FACTOR TRANSPORTER ATP-BINDING PROTEIN ECFA2"/>
    <property type="match status" value="1"/>
</dbReference>
<dbReference type="PANTHER" id="PTHR43553">
    <property type="entry name" value="HEAVY METAL TRANSPORTER"/>
    <property type="match status" value="1"/>
</dbReference>
<dbReference type="Pfam" id="PF00005">
    <property type="entry name" value="ABC_tran"/>
    <property type="match status" value="1"/>
</dbReference>
<dbReference type="SMART" id="SM00382">
    <property type="entry name" value="AAA"/>
    <property type="match status" value="1"/>
</dbReference>
<dbReference type="SUPFAM" id="SSF52540">
    <property type="entry name" value="P-loop containing nucleoside triphosphate hydrolases"/>
    <property type="match status" value="1"/>
</dbReference>
<dbReference type="PROSITE" id="PS00211">
    <property type="entry name" value="ABC_TRANSPORTER_1"/>
    <property type="match status" value="1"/>
</dbReference>
<dbReference type="PROSITE" id="PS50893">
    <property type="entry name" value="ABC_TRANSPORTER_2"/>
    <property type="match status" value="1"/>
</dbReference>
<dbReference type="PROSITE" id="PS51246">
    <property type="entry name" value="CBIO"/>
    <property type="match status" value="1"/>
</dbReference>
<accession>Q2YYM5</accession>
<comment type="function">
    <text evidence="1">ATP-binding (A) component of a common energy-coupling factor (ECF) ABC-transporter complex. Unlike classic ABC transporters this ECF transporter provides the energy necessary to transport a number of different substrates.</text>
</comment>
<comment type="subunit">
    <text evidence="1">Forms a stable energy-coupling factor (ECF) transporter complex composed of 2 membrane-embedded substrate-binding proteins (S component), 2 ATP-binding proteins (A component) and 2 transmembrane proteins (T component).</text>
</comment>
<comment type="subcellular location">
    <subcellularLocation>
        <location evidence="1">Cell membrane</location>
        <topology evidence="1">Peripheral membrane protein</topology>
    </subcellularLocation>
</comment>
<comment type="similarity">
    <text evidence="1">Belongs to the ABC transporter superfamily. Energy-coupling factor EcfA family.</text>
</comment>
<evidence type="ECO:0000255" key="1">
    <source>
        <dbReference type="HAMAP-Rule" id="MF_01710"/>
    </source>
</evidence>
<organism>
    <name type="scientific">Staphylococcus aureus (strain bovine RF122 / ET3-1)</name>
    <dbReference type="NCBI Taxonomy" id="273036"/>
    <lineage>
        <taxon>Bacteria</taxon>
        <taxon>Bacillati</taxon>
        <taxon>Bacillota</taxon>
        <taxon>Bacilli</taxon>
        <taxon>Bacillales</taxon>
        <taxon>Staphylococcaceae</taxon>
        <taxon>Staphylococcus</taxon>
    </lineage>
</organism>
<proteinExistence type="inferred from homology"/>
<keyword id="KW-0067">ATP-binding</keyword>
<keyword id="KW-1003">Cell membrane</keyword>
<keyword id="KW-0472">Membrane</keyword>
<keyword id="KW-0547">Nucleotide-binding</keyword>
<keyword id="KW-1278">Translocase</keyword>
<keyword id="KW-0813">Transport</keyword>